<proteinExistence type="inferred from homology"/>
<accession>Q8EWJ2</accession>
<feature type="chain" id="PRO_0000148810" description="Aspartyl/glutamyl-tRNA(Asn/Gln) amidotransferase subunit B">
    <location>
        <begin position="1"/>
        <end position="481"/>
    </location>
</feature>
<feature type="region of interest" description="Disordered" evidence="2">
    <location>
        <begin position="29"/>
        <end position="50"/>
    </location>
</feature>
<dbReference type="EC" id="6.3.5.-" evidence="1"/>
<dbReference type="EMBL" id="BA000026">
    <property type="protein sequence ID" value="BAC44002.1"/>
    <property type="molecule type" value="Genomic_DNA"/>
</dbReference>
<dbReference type="RefSeq" id="WP_011077038.1">
    <property type="nucleotide sequence ID" value="NC_004432.1"/>
</dbReference>
<dbReference type="SMR" id="Q8EWJ2"/>
<dbReference type="FunCoup" id="Q8EWJ2">
    <property type="interactions" value="249"/>
</dbReference>
<dbReference type="STRING" id="272633.gene:10731310"/>
<dbReference type="KEGG" id="mpe:MYPE2110"/>
<dbReference type="eggNOG" id="COG0064">
    <property type="taxonomic scope" value="Bacteria"/>
</dbReference>
<dbReference type="HOGENOM" id="CLU_019240_1_1_14"/>
<dbReference type="InParanoid" id="Q8EWJ2"/>
<dbReference type="Proteomes" id="UP000002522">
    <property type="component" value="Chromosome"/>
</dbReference>
<dbReference type="GO" id="GO:0050566">
    <property type="term" value="F:asparaginyl-tRNA synthase (glutamine-hydrolyzing) activity"/>
    <property type="evidence" value="ECO:0007669"/>
    <property type="project" value="RHEA"/>
</dbReference>
<dbReference type="GO" id="GO:0005524">
    <property type="term" value="F:ATP binding"/>
    <property type="evidence" value="ECO:0007669"/>
    <property type="project" value="UniProtKB-KW"/>
</dbReference>
<dbReference type="GO" id="GO:0050567">
    <property type="term" value="F:glutaminyl-tRNA synthase (glutamine-hydrolyzing) activity"/>
    <property type="evidence" value="ECO:0007669"/>
    <property type="project" value="UniProtKB-UniRule"/>
</dbReference>
<dbReference type="GO" id="GO:0070681">
    <property type="term" value="P:glutaminyl-tRNAGln biosynthesis via transamidation"/>
    <property type="evidence" value="ECO:0007669"/>
    <property type="project" value="TreeGrafter"/>
</dbReference>
<dbReference type="GO" id="GO:0006412">
    <property type="term" value="P:translation"/>
    <property type="evidence" value="ECO:0007669"/>
    <property type="project" value="UniProtKB-UniRule"/>
</dbReference>
<dbReference type="Gene3D" id="1.10.10.410">
    <property type="match status" value="1"/>
</dbReference>
<dbReference type="HAMAP" id="MF_00121">
    <property type="entry name" value="GatB"/>
    <property type="match status" value="1"/>
</dbReference>
<dbReference type="InterPro" id="IPR017959">
    <property type="entry name" value="Asn/Gln-tRNA_amidoTrfase_suB/E"/>
</dbReference>
<dbReference type="InterPro" id="IPR006075">
    <property type="entry name" value="Asn/Gln-tRNA_Trfase_suB/E_cat"/>
</dbReference>
<dbReference type="InterPro" id="IPR018027">
    <property type="entry name" value="Asn/Gln_amidotransferase"/>
</dbReference>
<dbReference type="InterPro" id="IPR003789">
    <property type="entry name" value="Asn/Gln_tRNA_amidoTrase-B-like"/>
</dbReference>
<dbReference type="InterPro" id="IPR004413">
    <property type="entry name" value="GatB"/>
</dbReference>
<dbReference type="InterPro" id="IPR023168">
    <property type="entry name" value="GatB_Yqey_C_2"/>
</dbReference>
<dbReference type="InterPro" id="IPR017958">
    <property type="entry name" value="Gln-tRNA_amidoTrfase_suB_CS"/>
</dbReference>
<dbReference type="InterPro" id="IPR014746">
    <property type="entry name" value="Gln_synth/guanido_kin_cat_dom"/>
</dbReference>
<dbReference type="NCBIfam" id="TIGR00133">
    <property type="entry name" value="gatB"/>
    <property type="match status" value="1"/>
</dbReference>
<dbReference type="NCBIfam" id="NF004012">
    <property type="entry name" value="PRK05477.1-2"/>
    <property type="match status" value="1"/>
</dbReference>
<dbReference type="NCBIfam" id="NF004014">
    <property type="entry name" value="PRK05477.1-4"/>
    <property type="match status" value="1"/>
</dbReference>
<dbReference type="PANTHER" id="PTHR11659">
    <property type="entry name" value="GLUTAMYL-TRNA GLN AMIDOTRANSFERASE SUBUNIT B MITOCHONDRIAL AND PROKARYOTIC PET112-RELATED"/>
    <property type="match status" value="1"/>
</dbReference>
<dbReference type="PANTHER" id="PTHR11659:SF0">
    <property type="entry name" value="GLUTAMYL-TRNA(GLN) AMIDOTRANSFERASE SUBUNIT B, MITOCHONDRIAL"/>
    <property type="match status" value="1"/>
</dbReference>
<dbReference type="Pfam" id="PF02934">
    <property type="entry name" value="GatB_N"/>
    <property type="match status" value="1"/>
</dbReference>
<dbReference type="Pfam" id="PF02637">
    <property type="entry name" value="GatB_Yqey"/>
    <property type="match status" value="1"/>
</dbReference>
<dbReference type="SMART" id="SM00845">
    <property type="entry name" value="GatB_Yqey"/>
    <property type="match status" value="1"/>
</dbReference>
<dbReference type="SUPFAM" id="SSF89095">
    <property type="entry name" value="GatB/YqeY motif"/>
    <property type="match status" value="1"/>
</dbReference>
<dbReference type="SUPFAM" id="SSF55931">
    <property type="entry name" value="Glutamine synthetase/guanido kinase"/>
    <property type="match status" value="1"/>
</dbReference>
<dbReference type="PROSITE" id="PS01234">
    <property type="entry name" value="GATB"/>
    <property type="match status" value="1"/>
</dbReference>
<gene>
    <name evidence="1" type="primary">gatB</name>
    <name type="ordered locus">MYPE2110</name>
</gene>
<keyword id="KW-0067">ATP-binding</keyword>
<keyword id="KW-0436">Ligase</keyword>
<keyword id="KW-0547">Nucleotide-binding</keyword>
<keyword id="KW-0648">Protein biosynthesis</keyword>
<keyword id="KW-1185">Reference proteome</keyword>
<name>GATB_MALP2</name>
<sequence>MEIKMKNNFETVIGIEVHVVLSSKTKMFSSSKSSHTDPKNTNISPIDLGHPGTMPLPNKRCIEKAIVLAKALDMEIEKNISFDRKNYFYQDLPKGFQITQQFHPIGKNGKIYLDENNFVDIERIHLEEDTAKQTKEDDGTILLDYNRSGIPLIEIVTKPCIKSSTEAGLFLKKLRRILTFNDISDAKMEEGSLRVDVNISVKPIGSKEFGTRVEIKNINSINNVEKAIEYESNLQAEQILKQEEVLMATKRFNDKTLTTEFMRLKTTNVDYHYMVEPNIFVRKISDDFITDVIKNNYTDIKSIEADLLKNNVSQEFINLLMDDYELFQKFKFINDEIKDCNEVIKWLCVEFVGSLNKVNLKLKDATDFQLNQLLKMMKYLLKDASINAKQGKEIVKLLIETNKDIDTLIEENNFKQITDKNVLRPILEKYVEANKPMLDQYDSRPERVEKFFIGMVMKDTNGQANPNVVTEIFNEILKLNK</sequence>
<evidence type="ECO:0000255" key="1">
    <source>
        <dbReference type="HAMAP-Rule" id="MF_00121"/>
    </source>
</evidence>
<evidence type="ECO:0000256" key="2">
    <source>
        <dbReference type="SAM" id="MobiDB-lite"/>
    </source>
</evidence>
<protein>
    <recommendedName>
        <fullName evidence="1">Aspartyl/glutamyl-tRNA(Asn/Gln) amidotransferase subunit B</fullName>
        <shortName evidence="1">Asp/Glu-ADT subunit B</shortName>
        <ecNumber evidence="1">6.3.5.-</ecNumber>
    </recommendedName>
</protein>
<organism>
    <name type="scientific">Malacoplasma penetrans (strain HF-2)</name>
    <name type="common">Mycoplasma penetrans</name>
    <dbReference type="NCBI Taxonomy" id="272633"/>
    <lineage>
        <taxon>Bacteria</taxon>
        <taxon>Bacillati</taxon>
        <taxon>Mycoplasmatota</taxon>
        <taxon>Mycoplasmoidales</taxon>
        <taxon>Mycoplasmoidaceae</taxon>
        <taxon>Malacoplasma</taxon>
    </lineage>
</organism>
<comment type="function">
    <text evidence="1">Allows the formation of correctly charged Asn-tRNA(Asn) or Gln-tRNA(Gln) through the transamidation of misacylated Asp-tRNA(Asn) or Glu-tRNA(Gln) in organisms which lack either or both of asparaginyl-tRNA or glutaminyl-tRNA synthetases. The reaction takes place in the presence of glutamine and ATP through an activated phospho-Asp-tRNA(Asn) or phospho-Glu-tRNA(Gln).</text>
</comment>
<comment type="catalytic activity">
    <reaction evidence="1">
        <text>L-glutamyl-tRNA(Gln) + L-glutamine + ATP + H2O = L-glutaminyl-tRNA(Gln) + L-glutamate + ADP + phosphate + H(+)</text>
        <dbReference type="Rhea" id="RHEA:17521"/>
        <dbReference type="Rhea" id="RHEA-COMP:9681"/>
        <dbReference type="Rhea" id="RHEA-COMP:9684"/>
        <dbReference type="ChEBI" id="CHEBI:15377"/>
        <dbReference type="ChEBI" id="CHEBI:15378"/>
        <dbReference type="ChEBI" id="CHEBI:29985"/>
        <dbReference type="ChEBI" id="CHEBI:30616"/>
        <dbReference type="ChEBI" id="CHEBI:43474"/>
        <dbReference type="ChEBI" id="CHEBI:58359"/>
        <dbReference type="ChEBI" id="CHEBI:78520"/>
        <dbReference type="ChEBI" id="CHEBI:78521"/>
        <dbReference type="ChEBI" id="CHEBI:456216"/>
    </reaction>
</comment>
<comment type="catalytic activity">
    <reaction evidence="1">
        <text>L-aspartyl-tRNA(Asn) + L-glutamine + ATP + H2O = L-asparaginyl-tRNA(Asn) + L-glutamate + ADP + phosphate + 2 H(+)</text>
        <dbReference type="Rhea" id="RHEA:14513"/>
        <dbReference type="Rhea" id="RHEA-COMP:9674"/>
        <dbReference type="Rhea" id="RHEA-COMP:9677"/>
        <dbReference type="ChEBI" id="CHEBI:15377"/>
        <dbReference type="ChEBI" id="CHEBI:15378"/>
        <dbReference type="ChEBI" id="CHEBI:29985"/>
        <dbReference type="ChEBI" id="CHEBI:30616"/>
        <dbReference type="ChEBI" id="CHEBI:43474"/>
        <dbReference type="ChEBI" id="CHEBI:58359"/>
        <dbReference type="ChEBI" id="CHEBI:78515"/>
        <dbReference type="ChEBI" id="CHEBI:78516"/>
        <dbReference type="ChEBI" id="CHEBI:456216"/>
    </reaction>
</comment>
<comment type="subunit">
    <text evidence="1">Heterotrimer of A, B and C subunits.</text>
</comment>
<comment type="similarity">
    <text evidence="1">Belongs to the GatB/GatE family. GatB subfamily.</text>
</comment>
<reference key="1">
    <citation type="journal article" date="2002" name="Nucleic Acids Res.">
        <title>The complete genomic sequence of Mycoplasma penetrans, an intracellular bacterial pathogen in humans.</title>
        <authorList>
            <person name="Sasaki Y."/>
            <person name="Ishikawa J."/>
            <person name="Yamashita A."/>
            <person name="Oshima K."/>
            <person name="Kenri T."/>
            <person name="Furuya K."/>
            <person name="Yoshino C."/>
            <person name="Horino A."/>
            <person name="Shiba T."/>
            <person name="Sasaki T."/>
            <person name="Hattori M."/>
        </authorList>
    </citation>
    <scope>NUCLEOTIDE SEQUENCE [LARGE SCALE GENOMIC DNA]</scope>
    <source>
        <strain>HF-2</strain>
    </source>
</reference>